<protein>
    <recommendedName>
        <fullName evidence="1">Dihydroxy-acid dehydratase</fullName>
        <shortName evidence="1">DAD</shortName>
        <ecNumber evidence="1">4.2.1.9</ecNumber>
    </recommendedName>
</protein>
<organism>
    <name type="scientific">Corynebacterium kroppenstedtii (strain DSM 44385 / JCM 11950 / CIP 105744 / CCUG 35717)</name>
    <dbReference type="NCBI Taxonomy" id="645127"/>
    <lineage>
        <taxon>Bacteria</taxon>
        <taxon>Bacillati</taxon>
        <taxon>Actinomycetota</taxon>
        <taxon>Actinomycetes</taxon>
        <taxon>Mycobacteriales</taxon>
        <taxon>Corynebacteriaceae</taxon>
        <taxon>Corynebacterium</taxon>
    </lineage>
</organism>
<name>ILVD_CORK4</name>
<gene>
    <name evidence="1" type="primary">ilvD</name>
    <name type="ordered locus">ckrop_1242</name>
</gene>
<comment type="function">
    <text evidence="1">Functions in the biosynthesis of branched-chain amino acids. Catalyzes the dehydration of (2R,3R)-2,3-dihydroxy-3-methylpentanoate (2,3-dihydroxy-3-methylvalerate) into 2-oxo-3-methylpentanoate (2-oxo-3-methylvalerate) and of (2R)-2,3-dihydroxy-3-methylbutanoate (2,3-dihydroxyisovalerate) into 2-oxo-3-methylbutanoate (2-oxoisovalerate), the penultimate precursor to L-isoleucine and L-valine, respectively.</text>
</comment>
<comment type="catalytic activity">
    <reaction evidence="1">
        <text>(2R)-2,3-dihydroxy-3-methylbutanoate = 3-methyl-2-oxobutanoate + H2O</text>
        <dbReference type="Rhea" id="RHEA:24809"/>
        <dbReference type="ChEBI" id="CHEBI:11851"/>
        <dbReference type="ChEBI" id="CHEBI:15377"/>
        <dbReference type="ChEBI" id="CHEBI:49072"/>
        <dbReference type="EC" id="4.2.1.9"/>
    </reaction>
    <physiologicalReaction direction="left-to-right" evidence="1">
        <dbReference type="Rhea" id="RHEA:24810"/>
    </physiologicalReaction>
</comment>
<comment type="catalytic activity">
    <reaction evidence="1">
        <text>(2R,3R)-2,3-dihydroxy-3-methylpentanoate = (S)-3-methyl-2-oxopentanoate + H2O</text>
        <dbReference type="Rhea" id="RHEA:27694"/>
        <dbReference type="ChEBI" id="CHEBI:15377"/>
        <dbReference type="ChEBI" id="CHEBI:35146"/>
        <dbReference type="ChEBI" id="CHEBI:49258"/>
        <dbReference type="EC" id="4.2.1.9"/>
    </reaction>
    <physiologicalReaction direction="left-to-right" evidence="1">
        <dbReference type="Rhea" id="RHEA:27695"/>
    </physiologicalReaction>
</comment>
<comment type="cofactor">
    <cofactor evidence="1">
        <name>[2Fe-2S] cluster</name>
        <dbReference type="ChEBI" id="CHEBI:190135"/>
    </cofactor>
    <text evidence="1">Binds 1 [2Fe-2S] cluster per subunit. This cluster acts as a Lewis acid cofactor.</text>
</comment>
<comment type="cofactor">
    <cofactor evidence="1">
        <name>Mg(2+)</name>
        <dbReference type="ChEBI" id="CHEBI:18420"/>
    </cofactor>
</comment>
<comment type="pathway">
    <text evidence="1">Amino-acid biosynthesis; L-isoleucine biosynthesis; L-isoleucine from 2-oxobutanoate: step 3/4.</text>
</comment>
<comment type="pathway">
    <text evidence="1">Amino-acid biosynthesis; L-valine biosynthesis; L-valine from pyruvate: step 3/4.</text>
</comment>
<comment type="subunit">
    <text evidence="1">Homodimer.</text>
</comment>
<comment type="similarity">
    <text evidence="1">Belongs to the IlvD/Edd family.</text>
</comment>
<reference key="1">
    <citation type="journal article" date="2008" name="J. Biotechnol.">
        <title>Ultrafast pyrosequencing of Corynebacterium kroppenstedtii DSM44385 revealed insights into the physiology of a lipophilic corynebacterium that lacks mycolic acids.</title>
        <authorList>
            <person name="Tauch A."/>
            <person name="Schneider J."/>
            <person name="Szczepanowski R."/>
            <person name="Tilker A."/>
            <person name="Viehoever P."/>
            <person name="Gartemann K.-H."/>
            <person name="Arnold W."/>
            <person name="Blom J."/>
            <person name="Brinkrolf K."/>
            <person name="Brune I."/>
            <person name="Goetker S."/>
            <person name="Weisshaar B."/>
            <person name="Goesmann A."/>
            <person name="Droege M."/>
            <person name="Puehler A."/>
        </authorList>
    </citation>
    <scope>NUCLEOTIDE SEQUENCE [LARGE SCALE GENOMIC DNA]</scope>
    <source>
        <strain>DSM 44385 / JCM 11950 / CIP 105744 / CCUG 35717</strain>
    </source>
</reference>
<accession>C4LJI1</accession>
<evidence type="ECO:0000255" key="1">
    <source>
        <dbReference type="HAMAP-Rule" id="MF_00012"/>
    </source>
</evidence>
<proteinExistence type="inferred from homology"/>
<keyword id="KW-0001">2Fe-2S</keyword>
<keyword id="KW-0028">Amino-acid biosynthesis</keyword>
<keyword id="KW-0100">Branched-chain amino acid biosynthesis</keyword>
<keyword id="KW-0408">Iron</keyword>
<keyword id="KW-0411">Iron-sulfur</keyword>
<keyword id="KW-0456">Lyase</keyword>
<keyword id="KW-0460">Magnesium</keyword>
<keyword id="KW-0479">Metal-binding</keyword>
<keyword id="KW-1185">Reference proteome</keyword>
<dbReference type="EC" id="4.2.1.9" evidence="1"/>
<dbReference type="EMBL" id="CP001620">
    <property type="protein sequence ID" value="ACR17986.1"/>
    <property type="molecule type" value="Genomic_DNA"/>
</dbReference>
<dbReference type="RefSeq" id="WP_012731873.1">
    <property type="nucleotide sequence ID" value="NC_012704.1"/>
</dbReference>
<dbReference type="SMR" id="C4LJI1"/>
<dbReference type="STRING" id="645127.ckrop_1242"/>
<dbReference type="KEGG" id="ckp:ckrop_1242"/>
<dbReference type="eggNOG" id="COG0129">
    <property type="taxonomic scope" value="Bacteria"/>
</dbReference>
<dbReference type="HOGENOM" id="CLU_014271_4_3_11"/>
<dbReference type="OrthoDB" id="9807077at2"/>
<dbReference type="UniPathway" id="UPA00047">
    <property type="reaction ID" value="UER00057"/>
</dbReference>
<dbReference type="UniPathway" id="UPA00049">
    <property type="reaction ID" value="UER00061"/>
</dbReference>
<dbReference type="Proteomes" id="UP000001473">
    <property type="component" value="Chromosome"/>
</dbReference>
<dbReference type="GO" id="GO:0005829">
    <property type="term" value="C:cytosol"/>
    <property type="evidence" value="ECO:0007669"/>
    <property type="project" value="TreeGrafter"/>
</dbReference>
<dbReference type="GO" id="GO:0051537">
    <property type="term" value="F:2 iron, 2 sulfur cluster binding"/>
    <property type="evidence" value="ECO:0007669"/>
    <property type="project" value="UniProtKB-UniRule"/>
</dbReference>
<dbReference type="GO" id="GO:0004160">
    <property type="term" value="F:dihydroxy-acid dehydratase activity"/>
    <property type="evidence" value="ECO:0007669"/>
    <property type="project" value="UniProtKB-UniRule"/>
</dbReference>
<dbReference type="GO" id="GO:0000287">
    <property type="term" value="F:magnesium ion binding"/>
    <property type="evidence" value="ECO:0007669"/>
    <property type="project" value="UniProtKB-UniRule"/>
</dbReference>
<dbReference type="GO" id="GO:0009097">
    <property type="term" value="P:isoleucine biosynthetic process"/>
    <property type="evidence" value="ECO:0007669"/>
    <property type="project" value="UniProtKB-UniRule"/>
</dbReference>
<dbReference type="GO" id="GO:0009099">
    <property type="term" value="P:L-valine biosynthetic process"/>
    <property type="evidence" value="ECO:0007669"/>
    <property type="project" value="UniProtKB-UniRule"/>
</dbReference>
<dbReference type="FunFam" id="3.50.30.80:FF:000001">
    <property type="entry name" value="Dihydroxy-acid dehydratase"/>
    <property type="match status" value="1"/>
</dbReference>
<dbReference type="Gene3D" id="3.50.30.80">
    <property type="entry name" value="IlvD/EDD C-terminal domain-like"/>
    <property type="match status" value="1"/>
</dbReference>
<dbReference type="HAMAP" id="MF_00012">
    <property type="entry name" value="IlvD"/>
    <property type="match status" value="1"/>
</dbReference>
<dbReference type="InterPro" id="IPR042096">
    <property type="entry name" value="Dihydro-acid_dehy_C"/>
</dbReference>
<dbReference type="InterPro" id="IPR004404">
    <property type="entry name" value="DihydroxyA_deHydtase"/>
</dbReference>
<dbReference type="InterPro" id="IPR020558">
    <property type="entry name" value="DiOHA_6PGluconate_deHydtase_CS"/>
</dbReference>
<dbReference type="InterPro" id="IPR056740">
    <property type="entry name" value="ILV_EDD_C"/>
</dbReference>
<dbReference type="InterPro" id="IPR000581">
    <property type="entry name" value="ILV_EDD_N"/>
</dbReference>
<dbReference type="InterPro" id="IPR037237">
    <property type="entry name" value="IlvD/EDD_N"/>
</dbReference>
<dbReference type="NCBIfam" id="TIGR00110">
    <property type="entry name" value="ilvD"/>
    <property type="match status" value="1"/>
</dbReference>
<dbReference type="NCBIfam" id="NF009103">
    <property type="entry name" value="PRK12448.1"/>
    <property type="match status" value="1"/>
</dbReference>
<dbReference type="PANTHER" id="PTHR43661">
    <property type="entry name" value="D-XYLONATE DEHYDRATASE"/>
    <property type="match status" value="1"/>
</dbReference>
<dbReference type="PANTHER" id="PTHR43661:SF3">
    <property type="entry name" value="D-XYLONATE DEHYDRATASE YAGF-RELATED"/>
    <property type="match status" value="1"/>
</dbReference>
<dbReference type="Pfam" id="PF24877">
    <property type="entry name" value="ILV_EDD_C"/>
    <property type="match status" value="1"/>
</dbReference>
<dbReference type="Pfam" id="PF00920">
    <property type="entry name" value="ILVD_EDD_N"/>
    <property type="match status" value="1"/>
</dbReference>
<dbReference type="SUPFAM" id="SSF143975">
    <property type="entry name" value="IlvD/EDD N-terminal domain-like"/>
    <property type="match status" value="1"/>
</dbReference>
<dbReference type="SUPFAM" id="SSF52016">
    <property type="entry name" value="LeuD/IlvD-like"/>
    <property type="match status" value="1"/>
</dbReference>
<dbReference type="PROSITE" id="PS00886">
    <property type="entry name" value="ILVD_EDD_1"/>
    <property type="match status" value="1"/>
</dbReference>
<dbReference type="PROSITE" id="PS00887">
    <property type="entry name" value="ILVD_EDD_2"/>
    <property type="match status" value="1"/>
</dbReference>
<sequence>MIPLRSSVTTQGRNAAGARALWRAAGLKDGDFNKPIIAIANSYTQFVPGHVHLKDVGDIVAGAIREAGGVPREFNTIAVDDGIAMGHGGMLYSLPSREIISDSVEYMVNAHAADAIVCISNCDKITPGMLNAAMRLNIPAIFVSGGPMEAGKAVVVDGVAHTPTDLITAISASANDSVDDRGLSIVENSACPTCGSCSGMFTANSMNSLTEALGLSLPGNGSTLATHAARRALFENAGRTIVDMCQRYYNHDDDSVLPRNVANKHAFDNAMTLDMAMGGSTNTVLHILAAAQEGDIDFDLADIDRLSREVPCLSKVAPNSNYHMEDVHRAGGIPAILGELNRAGLLHDDVHAVHAQSLSDWLATWDIRTDNPTQIALDLFHAAPGGVRTTVPFSTDNKWDELDTDSENGCIRDVDHAYTADGGLVILRGNLAEDGAVIKAAGIDESLWHFSGPAHVLESQEDAVNAILNKQIKPGEVVVIRYEGPAGGPGMQEMLHPTAFLKGAGLGTQCALITDGRFSGGSSGISVGHISPEAAHGGLIGLIHDGDTVTIDVHKRQLTLDVPEDVLAERREKMNVSEHPWRPLNRQRRVSKALQAYASMATSADTGAVRKVNDRR</sequence>
<feature type="chain" id="PRO_1000201772" description="Dihydroxy-acid dehydratase">
    <location>
        <begin position="1"/>
        <end position="616"/>
    </location>
</feature>
<feature type="active site" description="Proton acceptor" evidence="1">
    <location>
        <position position="519"/>
    </location>
</feature>
<feature type="binding site" evidence="1">
    <location>
        <position position="81"/>
    </location>
    <ligand>
        <name>Mg(2+)</name>
        <dbReference type="ChEBI" id="CHEBI:18420"/>
    </ligand>
</feature>
<feature type="binding site" evidence="1">
    <location>
        <position position="122"/>
    </location>
    <ligand>
        <name>[2Fe-2S] cluster</name>
        <dbReference type="ChEBI" id="CHEBI:190135"/>
    </ligand>
</feature>
<feature type="binding site" evidence="1">
    <location>
        <position position="123"/>
    </location>
    <ligand>
        <name>Mg(2+)</name>
        <dbReference type="ChEBI" id="CHEBI:18420"/>
    </ligand>
</feature>
<feature type="binding site" description="via carbamate group" evidence="1">
    <location>
        <position position="124"/>
    </location>
    <ligand>
        <name>Mg(2+)</name>
        <dbReference type="ChEBI" id="CHEBI:18420"/>
    </ligand>
</feature>
<feature type="binding site" evidence="1">
    <location>
        <position position="197"/>
    </location>
    <ligand>
        <name>[2Fe-2S] cluster</name>
        <dbReference type="ChEBI" id="CHEBI:190135"/>
    </ligand>
</feature>
<feature type="binding site" evidence="1">
    <location>
        <position position="493"/>
    </location>
    <ligand>
        <name>Mg(2+)</name>
        <dbReference type="ChEBI" id="CHEBI:18420"/>
    </ligand>
</feature>
<feature type="modified residue" description="N6-carboxylysine" evidence="1">
    <location>
        <position position="124"/>
    </location>
</feature>